<evidence type="ECO:0000255" key="1">
    <source>
        <dbReference type="HAMAP-Rule" id="MF_00188"/>
    </source>
</evidence>
<organism>
    <name type="scientific">Pseudomonas aeruginosa (strain LESB58)</name>
    <dbReference type="NCBI Taxonomy" id="557722"/>
    <lineage>
        <taxon>Bacteria</taxon>
        <taxon>Pseudomonadati</taxon>
        <taxon>Pseudomonadota</taxon>
        <taxon>Gammaproteobacteria</taxon>
        <taxon>Pseudomonadales</taxon>
        <taxon>Pseudomonadaceae</taxon>
        <taxon>Pseudomonas</taxon>
    </lineage>
</organism>
<comment type="cofactor">
    <cofactor evidence="1">
        <name>Zn(2+)</name>
        <dbReference type="ChEBI" id="CHEBI:29105"/>
    </cofactor>
    <text evidence="1">Binds 1 zinc ion per subunit.</text>
</comment>
<comment type="subcellular location">
    <subcellularLocation>
        <location evidence="1">Cell inner membrane</location>
        <topology evidence="1">Multi-pass membrane protein</topology>
    </subcellularLocation>
</comment>
<comment type="similarity">
    <text evidence="1">Belongs to the peptidase M48B family.</text>
</comment>
<reference key="1">
    <citation type="journal article" date="2009" name="Genome Res.">
        <title>Newly introduced genomic prophage islands are critical determinants of in vivo competitiveness in the Liverpool epidemic strain of Pseudomonas aeruginosa.</title>
        <authorList>
            <person name="Winstanley C."/>
            <person name="Langille M.G.I."/>
            <person name="Fothergill J.L."/>
            <person name="Kukavica-Ibrulj I."/>
            <person name="Paradis-Bleau C."/>
            <person name="Sanschagrin F."/>
            <person name="Thomson N.R."/>
            <person name="Winsor G.L."/>
            <person name="Quail M.A."/>
            <person name="Lennard N."/>
            <person name="Bignell A."/>
            <person name="Clarke L."/>
            <person name="Seeger K."/>
            <person name="Saunders D."/>
            <person name="Harris D."/>
            <person name="Parkhill J."/>
            <person name="Hancock R.E.W."/>
            <person name="Brinkman F.S.L."/>
            <person name="Levesque R.C."/>
        </authorList>
    </citation>
    <scope>NUCLEOTIDE SEQUENCE [LARGE SCALE GENOMIC DNA]</scope>
    <source>
        <strain>LESB58</strain>
    </source>
</reference>
<accession>B7UUZ6</accession>
<name>HTPX_PSEA8</name>
<keyword id="KW-0997">Cell inner membrane</keyword>
<keyword id="KW-1003">Cell membrane</keyword>
<keyword id="KW-0378">Hydrolase</keyword>
<keyword id="KW-0472">Membrane</keyword>
<keyword id="KW-0479">Metal-binding</keyword>
<keyword id="KW-0482">Metalloprotease</keyword>
<keyword id="KW-0645">Protease</keyword>
<keyword id="KW-0346">Stress response</keyword>
<keyword id="KW-0812">Transmembrane</keyword>
<keyword id="KW-1133">Transmembrane helix</keyword>
<keyword id="KW-0862">Zinc</keyword>
<gene>
    <name evidence="1" type="primary">htpX</name>
    <name type="ordered locus">PLES_22351</name>
</gene>
<feature type="chain" id="PRO_1000192746" description="Protease HtpX">
    <location>
        <begin position="1"/>
        <end position="291"/>
    </location>
</feature>
<feature type="transmembrane region" description="Helical" evidence="1">
    <location>
        <begin position="4"/>
        <end position="24"/>
    </location>
</feature>
<feature type="transmembrane region" description="Helical" evidence="1">
    <location>
        <begin position="36"/>
        <end position="56"/>
    </location>
</feature>
<feature type="transmembrane region" description="Helical" evidence="1">
    <location>
        <begin position="150"/>
        <end position="170"/>
    </location>
</feature>
<feature type="transmembrane region" description="Helical" evidence="1">
    <location>
        <begin position="193"/>
        <end position="213"/>
    </location>
</feature>
<feature type="active site" evidence="1">
    <location>
        <position position="143"/>
    </location>
</feature>
<feature type="binding site" evidence="1">
    <location>
        <position position="142"/>
    </location>
    <ligand>
        <name>Zn(2+)</name>
        <dbReference type="ChEBI" id="CHEBI:29105"/>
        <note>catalytic</note>
    </ligand>
</feature>
<feature type="binding site" evidence="1">
    <location>
        <position position="146"/>
    </location>
    <ligand>
        <name>Zn(2+)</name>
        <dbReference type="ChEBI" id="CHEBI:29105"/>
        <note>catalytic</note>
    </ligand>
</feature>
<feature type="binding site" evidence="1">
    <location>
        <position position="219"/>
    </location>
    <ligand>
        <name>Zn(2+)</name>
        <dbReference type="ChEBI" id="CHEBI:29105"/>
        <note>catalytic</note>
    </ligand>
</feature>
<proteinExistence type="inferred from homology"/>
<protein>
    <recommendedName>
        <fullName evidence="1">Protease HtpX</fullName>
        <ecNumber evidence="1">3.4.24.-</ecNumber>
    </recommendedName>
    <alternativeName>
        <fullName evidence="1">Heat shock protein HtpX</fullName>
    </alternativeName>
</protein>
<sequence length="291" mass="31593">MMRILLFLATNLAVLVIASITLKLLGVDRFTGQNYGSLLVFCAVFGFAGSLVSLFISKWMAKMSTGTEVISQPRTRHEQWLLQTVEELSREAGIKMPEVGIFPAYEANAFATGWNKNDALVAVSQGLLERFSPDEVKAVLAHEIGHVANGDMVTLALIQGVVNTFVMFFARIFGNFVDKAILKNEDGPGIGYFVATIFAELVLGILASIIVMWFSRRREFRADAAGAHLAGTGAMIAALQRLRSEQGVPVQMPDTLNAFGINGGLKHGLAGLLMSHPPLEDRIEALRASAR</sequence>
<dbReference type="EC" id="3.4.24.-" evidence="1"/>
<dbReference type="EMBL" id="FM209186">
    <property type="protein sequence ID" value="CAW26962.1"/>
    <property type="molecule type" value="Genomic_DNA"/>
</dbReference>
<dbReference type="RefSeq" id="WP_003090915.1">
    <property type="nucleotide sequence ID" value="NC_011770.1"/>
</dbReference>
<dbReference type="SMR" id="B7UUZ6"/>
<dbReference type="MEROPS" id="M48.002"/>
<dbReference type="GeneID" id="77220667"/>
<dbReference type="KEGG" id="pag:PLES_22351"/>
<dbReference type="HOGENOM" id="CLU_042266_1_0_6"/>
<dbReference type="GO" id="GO:0005886">
    <property type="term" value="C:plasma membrane"/>
    <property type="evidence" value="ECO:0007669"/>
    <property type="project" value="UniProtKB-SubCell"/>
</dbReference>
<dbReference type="GO" id="GO:0004222">
    <property type="term" value="F:metalloendopeptidase activity"/>
    <property type="evidence" value="ECO:0007669"/>
    <property type="project" value="UniProtKB-UniRule"/>
</dbReference>
<dbReference type="GO" id="GO:0008270">
    <property type="term" value="F:zinc ion binding"/>
    <property type="evidence" value="ECO:0007669"/>
    <property type="project" value="UniProtKB-UniRule"/>
</dbReference>
<dbReference type="GO" id="GO:0006508">
    <property type="term" value="P:proteolysis"/>
    <property type="evidence" value="ECO:0007669"/>
    <property type="project" value="UniProtKB-KW"/>
</dbReference>
<dbReference type="CDD" id="cd07335">
    <property type="entry name" value="M48B_HtpX_like"/>
    <property type="match status" value="1"/>
</dbReference>
<dbReference type="Gene3D" id="3.30.2010.10">
    <property type="entry name" value="Metalloproteases ('zincins'), catalytic domain"/>
    <property type="match status" value="1"/>
</dbReference>
<dbReference type="HAMAP" id="MF_00188">
    <property type="entry name" value="Pept_M48_protease_HtpX"/>
    <property type="match status" value="1"/>
</dbReference>
<dbReference type="InterPro" id="IPR050083">
    <property type="entry name" value="HtpX_protease"/>
</dbReference>
<dbReference type="InterPro" id="IPR022919">
    <property type="entry name" value="Pept_M48_protease_HtpX"/>
</dbReference>
<dbReference type="InterPro" id="IPR001915">
    <property type="entry name" value="Peptidase_M48"/>
</dbReference>
<dbReference type="NCBIfam" id="NF003965">
    <property type="entry name" value="PRK05457.1"/>
    <property type="match status" value="1"/>
</dbReference>
<dbReference type="PANTHER" id="PTHR43221">
    <property type="entry name" value="PROTEASE HTPX"/>
    <property type="match status" value="1"/>
</dbReference>
<dbReference type="PANTHER" id="PTHR43221:SF1">
    <property type="entry name" value="PROTEASE HTPX"/>
    <property type="match status" value="1"/>
</dbReference>
<dbReference type="Pfam" id="PF01435">
    <property type="entry name" value="Peptidase_M48"/>
    <property type="match status" value="1"/>
</dbReference>